<reference key="1">
    <citation type="journal article" date="2005" name="Nature">
        <title>Genome sequence, comparative analysis and haplotype structure of the domestic dog.</title>
        <authorList>
            <person name="Lindblad-Toh K."/>
            <person name="Wade C.M."/>
            <person name="Mikkelsen T.S."/>
            <person name="Karlsson E.K."/>
            <person name="Jaffe D.B."/>
            <person name="Kamal M."/>
            <person name="Clamp M."/>
            <person name="Chang J.L."/>
            <person name="Kulbokas E.J. III"/>
            <person name="Zody M.C."/>
            <person name="Mauceli E."/>
            <person name="Xie X."/>
            <person name="Breen M."/>
            <person name="Wayne R.K."/>
            <person name="Ostrander E.A."/>
            <person name="Ponting C.P."/>
            <person name="Galibert F."/>
            <person name="Smith D.R."/>
            <person name="deJong P.J."/>
            <person name="Kirkness E.F."/>
            <person name="Alvarez P."/>
            <person name="Biagi T."/>
            <person name="Brockman W."/>
            <person name="Butler J."/>
            <person name="Chin C.-W."/>
            <person name="Cook A."/>
            <person name="Cuff J."/>
            <person name="Daly M.J."/>
            <person name="DeCaprio D."/>
            <person name="Gnerre S."/>
            <person name="Grabherr M."/>
            <person name="Kellis M."/>
            <person name="Kleber M."/>
            <person name="Bardeleben C."/>
            <person name="Goodstadt L."/>
            <person name="Heger A."/>
            <person name="Hitte C."/>
            <person name="Kim L."/>
            <person name="Koepfli K.-P."/>
            <person name="Parker H.G."/>
            <person name="Pollinger J.P."/>
            <person name="Searle S.M.J."/>
            <person name="Sutter N.B."/>
            <person name="Thomas R."/>
            <person name="Webber C."/>
            <person name="Baldwin J."/>
            <person name="Abebe A."/>
            <person name="Abouelleil A."/>
            <person name="Aftuck L."/>
            <person name="Ait-Zahra M."/>
            <person name="Aldredge T."/>
            <person name="Allen N."/>
            <person name="An P."/>
            <person name="Anderson S."/>
            <person name="Antoine C."/>
            <person name="Arachchi H."/>
            <person name="Aslam A."/>
            <person name="Ayotte L."/>
            <person name="Bachantsang P."/>
            <person name="Barry A."/>
            <person name="Bayul T."/>
            <person name="Benamara M."/>
            <person name="Berlin A."/>
            <person name="Bessette D."/>
            <person name="Blitshteyn B."/>
            <person name="Bloom T."/>
            <person name="Blye J."/>
            <person name="Boguslavskiy L."/>
            <person name="Bonnet C."/>
            <person name="Boukhgalter B."/>
            <person name="Brown A."/>
            <person name="Cahill P."/>
            <person name="Calixte N."/>
            <person name="Camarata J."/>
            <person name="Cheshatsang Y."/>
            <person name="Chu J."/>
            <person name="Citroen M."/>
            <person name="Collymore A."/>
            <person name="Cooke P."/>
            <person name="Dawoe T."/>
            <person name="Daza R."/>
            <person name="Decktor K."/>
            <person name="DeGray S."/>
            <person name="Dhargay N."/>
            <person name="Dooley K."/>
            <person name="Dooley K."/>
            <person name="Dorje P."/>
            <person name="Dorjee K."/>
            <person name="Dorris L."/>
            <person name="Duffey N."/>
            <person name="Dupes A."/>
            <person name="Egbiremolen O."/>
            <person name="Elong R."/>
            <person name="Falk J."/>
            <person name="Farina A."/>
            <person name="Faro S."/>
            <person name="Ferguson D."/>
            <person name="Ferreira P."/>
            <person name="Fisher S."/>
            <person name="FitzGerald M."/>
            <person name="Foley K."/>
            <person name="Foley C."/>
            <person name="Franke A."/>
            <person name="Friedrich D."/>
            <person name="Gage D."/>
            <person name="Garber M."/>
            <person name="Gearin G."/>
            <person name="Giannoukos G."/>
            <person name="Goode T."/>
            <person name="Goyette A."/>
            <person name="Graham J."/>
            <person name="Grandbois E."/>
            <person name="Gyaltsen K."/>
            <person name="Hafez N."/>
            <person name="Hagopian D."/>
            <person name="Hagos B."/>
            <person name="Hall J."/>
            <person name="Healy C."/>
            <person name="Hegarty R."/>
            <person name="Honan T."/>
            <person name="Horn A."/>
            <person name="Houde N."/>
            <person name="Hughes L."/>
            <person name="Hunnicutt L."/>
            <person name="Husby M."/>
            <person name="Jester B."/>
            <person name="Jones C."/>
            <person name="Kamat A."/>
            <person name="Kanga B."/>
            <person name="Kells C."/>
            <person name="Khazanovich D."/>
            <person name="Kieu A.C."/>
            <person name="Kisner P."/>
            <person name="Kumar M."/>
            <person name="Lance K."/>
            <person name="Landers T."/>
            <person name="Lara M."/>
            <person name="Lee W."/>
            <person name="Leger J.-P."/>
            <person name="Lennon N."/>
            <person name="Leuper L."/>
            <person name="LeVine S."/>
            <person name="Liu J."/>
            <person name="Liu X."/>
            <person name="Lokyitsang Y."/>
            <person name="Lokyitsang T."/>
            <person name="Lui A."/>
            <person name="Macdonald J."/>
            <person name="Major J."/>
            <person name="Marabella R."/>
            <person name="Maru K."/>
            <person name="Matthews C."/>
            <person name="McDonough S."/>
            <person name="Mehta T."/>
            <person name="Meldrim J."/>
            <person name="Melnikov A."/>
            <person name="Meneus L."/>
            <person name="Mihalev A."/>
            <person name="Mihova T."/>
            <person name="Miller K."/>
            <person name="Mittelman R."/>
            <person name="Mlenga V."/>
            <person name="Mulrain L."/>
            <person name="Munson G."/>
            <person name="Navidi A."/>
            <person name="Naylor J."/>
            <person name="Nguyen T."/>
            <person name="Nguyen N."/>
            <person name="Nguyen C."/>
            <person name="Nguyen T."/>
            <person name="Nicol R."/>
            <person name="Norbu N."/>
            <person name="Norbu C."/>
            <person name="Novod N."/>
            <person name="Nyima T."/>
            <person name="Olandt P."/>
            <person name="O'Neill B."/>
            <person name="O'Neill K."/>
            <person name="Osman S."/>
            <person name="Oyono L."/>
            <person name="Patti C."/>
            <person name="Perrin D."/>
            <person name="Phunkhang P."/>
            <person name="Pierre F."/>
            <person name="Priest M."/>
            <person name="Rachupka A."/>
            <person name="Raghuraman S."/>
            <person name="Rameau R."/>
            <person name="Ray V."/>
            <person name="Raymond C."/>
            <person name="Rege F."/>
            <person name="Rise C."/>
            <person name="Rogers J."/>
            <person name="Rogov P."/>
            <person name="Sahalie J."/>
            <person name="Settipalli S."/>
            <person name="Sharpe T."/>
            <person name="Shea T."/>
            <person name="Sheehan M."/>
            <person name="Sherpa N."/>
            <person name="Shi J."/>
            <person name="Shih D."/>
            <person name="Sloan J."/>
            <person name="Smith C."/>
            <person name="Sparrow T."/>
            <person name="Stalker J."/>
            <person name="Stange-Thomann N."/>
            <person name="Stavropoulos S."/>
            <person name="Stone C."/>
            <person name="Stone S."/>
            <person name="Sykes S."/>
            <person name="Tchuinga P."/>
            <person name="Tenzing P."/>
            <person name="Tesfaye S."/>
            <person name="Thoulutsang D."/>
            <person name="Thoulutsang Y."/>
            <person name="Topham K."/>
            <person name="Topping I."/>
            <person name="Tsamla T."/>
            <person name="Vassiliev H."/>
            <person name="Venkataraman V."/>
            <person name="Vo A."/>
            <person name="Wangchuk T."/>
            <person name="Wangdi T."/>
            <person name="Weiand M."/>
            <person name="Wilkinson J."/>
            <person name="Wilson A."/>
            <person name="Yadav S."/>
            <person name="Yang S."/>
            <person name="Yang X."/>
            <person name="Young G."/>
            <person name="Yu Q."/>
            <person name="Zainoun J."/>
            <person name="Zembek L."/>
            <person name="Zimmer A."/>
            <person name="Lander E.S."/>
        </authorList>
    </citation>
    <scope>NUCLEOTIDE SEQUENCE [LARGE SCALE GENOMIC DNA]</scope>
    <source>
        <strain>Boxer</strain>
    </source>
</reference>
<reference key="2">
    <citation type="journal article" date="1980" name="Biochem. Biophys. Res. Commun.">
        <title>Comparison of the human, canine and swine E apoproteins.</title>
        <authorList>
            <person name="Weisgraber K.H."/>
            <person name="Troxler R.F."/>
            <person name="Rall S.C."/>
            <person name="Mahley R.W."/>
        </authorList>
    </citation>
    <scope>PROTEIN SEQUENCE OF 19-38</scope>
</reference>
<reference key="3">
    <citation type="journal article" date="1989" name="J. Lipid Res.">
        <title>Structure and expression of dog apolipoprotein A-I, E, and C-I mRNAs: implications for the evolution and functional constraints of apolipoprotein structure.</title>
        <authorList>
            <person name="Luo C.-C."/>
            <person name="Li W.-H."/>
            <person name="Chan L."/>
        </authorList>
    </citation>
    <scope>NUCLEOTIDE SEQUENCE [MRNA] OF 33-323</scope>
    <source>
        <tissue>Liver</tissue>
    </source>
</reference>
<keyword id="KW-0162">Chylomicron</keyword>
<keyword id="KW-0903">Direct protein sequencing</keyword>
<keyword id="KW-0967">Endosome</keyword>
<keyword id="KW-0272">Extracellular matrix</keyword>
<keyword id="KW-0325">Glycoprotein</keyword>
<keyword id="KW-0345">HDL</keyword>
<keyword id="KW-0358">Heparin-binding</keyword>
<keyword id="KW-0445">Lipid transport</keyword>
<keyword id="KW-0446">Lipid-binding</keyword>
<keyword id="KW-0558">Oxidation</keyword>
<keyword id="KW-0597">Phosphoprotein</keyword>
<keyword id="KW-1185">Reference proteome</keyword>
<keyword id="KW-0677">Repeat</keyword>
<keyword id="KW-0964">Secreted</keyword>
<keyword id="KW-0732">Signal</keyword>
<keyword id="KW-0813">Transport</keyword>
<keyword id="KW-0850">VLDL</keyword>
<sequence>MKVLWAALVVTLLAGCWADVQPEPELERELEPKVQQELEPEAGWQTGQPWEAALARFWDYLRWVQTLSDQVQEGVLNTQVTQELTALMDETMKEVKAYKAELDEQLGPMTSETQARVAKELQAAQARLRSDMEDVRNRLTQYRGELQAMLGQSSEELRARFASHMRKLRKRVLRDAEDLQRRLAVYKAGVREGAERSVSSIRERLWPLLEQARERNAKVGALATQPLLERADALGQQLRGQLEEMSSRARGHLEEMREQIQEVRVKMEEQADQIRQKAEAFQARLKSWFEPLLEDMQRQWDGLVEKVQAAVATIPTSKPVEEP</sequence>
<evidence type="ECO:0000250" key="1">
    <source>
        <dbReference type="UniProtKB" id="P02649"/>
    </source>
</evidence>
<evidence type="ECO:0000250" key="2">
    <source>
        <dbReference type="UniProtKB" id="P08226"/>
    </source>
</evidence>
<evidence type="ECO:0000269" key="3">
    <source>
    </source>
</evidence>
<evidence type="ECO:0000305" key="4"/>
<comment type="function">
    <text evidence="1">APOE is an apolipoprotein, a protein associating with lipid particles, that mainly functions in lipoprotein-mediated lipid transport between organs via the plasma and interstitial fluids. APOE is a core component of plasma lipoproteins and is involved in their production, conversion and clearance. Apolipoproteins are amphipathic molecules that interact both with lipids of the lipoprotein particle core and the aqueous environment of the plasma. As such, APOE associates with chylomicrons, chylomicron remnants, very low density lipoproteins (VLDL) and intermediate density lipoproteins (IDL) but shows a preferential binding to high-density lipoproteins (HDL). It also binds a wide range of cellular receptors including the LDL receptor/LDLR and the very low-density lipoprotein receptor/VLDLR that mediate the cellular uptake of the APOE-containing lipoprotein particles. Finally, APOE also has a heparin-binding activity and binds heparan-sulfate proteoglycans on the surface of cells, a property that supports the capture and the receptor-mediated uptake of APOE-containing lipoproteins by cells.</text>
</comment>
<comment type="subunit">
    <text evidence="1">Homotetramer. May interact with ABCA1; functionally associated with ABCA1 in the biogenesis of HDLs. May interact with APP/A4 amyloid-beta peptide; the interaction is extremely stable in vitro but its physiological significance is unclear. May interact with MAPT. May interact with MAP2. In the cerebrospinal fluid, interacts with secreted SORL1. Interacts with PMEL; this allows the loading of PMEL luminal fragment on ILVs to induce fibril nucleation.</text>
</comment>
<comment type="subcellular location">
    <subcellularLocation>
        <location evidence="1">Secreted</location>
    </subcellularLocation>
    <subcellularLocation>
        <location evidence="1">Secreted</location>
        <location evidence="1">Extracellular space</location>
    </subcellularLocation>
    <subcellularLocation>
        <location evidence="1">Secreted</location>
        <location evidence="1">Extracellular space</location>
        <location evidence="1">Extracellular matrix</location>
    </subcellularLocation>
    <subcellularLocation>
        <location evidence="1">Extracellular vesicle</location>
    </subcellularLocation>
    <subcellularLocation>
        <location evidence="1">Endosome</location>
        <location evidence="1">Multivesicular body</location>
    </subcellularLocation>
    <text evidence="1">In the plasma, APOE is associated with chylomicrons, chylomicrons remnants, VLDL, LDL and HDL lipoproteins. Lipid poor oligomeric APOE is associated with the extracellular matrix in a calcium- and heparan-sulfate proteoglycans-dependent manner. Lipidation induces the release from the extracellular matrix. Colocalizes with CD63 and PMEL at exosomes and in intraluminal vesicles within multivesicular endosomes.</text>
</comment>
<comment type="PTM">
    <text evidence="1">APOE exists as multiple glycosylated and sialylated glycoforms within cells and in plasma. The extent of glycosylation and sialylation are tissue and context specific.</text>
</comment>
<comment type="PTM">
    <text evidence="1">Glycated in plasma VLDL.</text>
</comment>
<comment type="PTM">
    <text evidence="1">Phosphorylated by FAM20C in the extracellular medium.</text>
</comment>
<comment type="similarity">
    <text evidence="4">Belongs to the apolipoprotein A1/A4/E family.</text>
</comment>
<accession>P18649</accession>
<accession>F1PJ74</accession>
<protein>
    <recommendedName>
        <fullName>Apolipoprotein E</fullName>
        <shortName>Apo-E</shortName>
    </recommendedName>
</protein>
<name>APOE_CANLF</name>
<dbReference type="EMBL" id="AAEX03000895">
    <property type="status" value="NOT_ANNOTATED_CDS"/>
    <property type="molecule type" value="Genomic_DNA"/>
</dbReference>
<dbReference type="PIR" id="A05310">
    <property type="entry name" value="A05310"/>
</dbReference>
<dbReference type="PIR" id="C60940">
    <property type="entry name" value="C60940"/>
</dbReference>
<dbReference type="RefSeq" id="XP_005616517.2">
    <property type="nucleotide sequence ID" value="XM_005616460.4"/>
</dbReference>
<dbReference type="RefSeq" id="XP_022280728.1">
    <property type="nucleotide sequence ID" value="XM_022425020.2"/>
</dbReference>
<dbReference type="RefSeq" id="XP_038384541.1">
    <property type="nucleotide sequence ID" value="XM_038528613.1"/>
</dbReference>
<dbReference type="RefSeq" id="XP_038384542.1">
    <property type="nucleotide sequence ID" value="XM_038528614.1"/>
</dbReference>
<dbReference type="RefSeq" id="XP_038384543.1">
    <property type="nucleotide sequence ID" value="XM_038528615.1"/>
</dbReference>
<dbReference type="RefSeq" id="XP_038384544.1">
    <property type="nucleotide sequence ID" value="XM_038528616.1"/>
</dbReference>
<dbReference type="RefSeq" id="XP_038512631.1">
    <property type="nucleotide sequence ID" value="XM_038656703.1"/>
</dbReference>
<dbReference type="RefSeq" id="XP_038512632.1">
    <property type="nucleotide sequence ID" value="XM_038656704.1"/>
</dbReference>
<dbReference type="RefSeq" id="XP_038512633.1">
    <property type="nucleotide sequence ID" value="XM_038656705.1"/>
</dbReference>
<dbReference type="RefSeq" id="XP_038512634.1">
    <property type="nucleotide sequence ID" value="XM_038656706.1"/>
</dbReference>
<dbReference type="RefSeq" id="XP_533644.1">
    <property type="nucleotide sequence ID" value="XM_533644.7"/>
</dbReference>
<dbReference type="RefSeq" id="XP_866043.1">
    <property type="nucleotide sequence ID" value="XM_860950.5"/>
</dbReference>
<dbReference type="SMR" id="P18649"/>
<dbReference type="FunCoup" id="P18649">
    <property type="interactions" value="7"/>
</dbReference>
<dbReference type="STRING" id="9615.ENSCAFP00000006888"/>
<dbReference type="PaxDb" id="9612-ENSCAFP00000006888"/>
<dbReference type="Ensembl" id="ENSCAFT00000092662.2">
    <property type="protein sequence ID" value="ENSCAFP00000057461.2"/>
    <property type="gene ID" value="ENSCAFG00000004617.5"/>
</dbReference>
<dbReference type="Ensembl" id="ENSCAFT00845011898.1">
    <property type="protein sequence ID" value="ENSCAFP00845009282.1"/>
    <property type="gene ID" value="ENSCAFG00845006705.1"/>
</dbReference>
<dbReference type="GeneID" id="476438"/>
<dbReference type="KEGG" id="cfa:476438"/>
<dbReference type="CTD" id="348"/>
<dbReference type="VEuPathDB" id="HostDB:ENSCAFG00845006705"/>
<dbReference type="VGNC" id="VGNC:38002">
    <property type="gene designation" value="APOE"/>
</dbReference>
<dbReference type="eggNOG" id="ENOG502QVD6">
    <property type="taxonomic scope" value="Eukaryota"/>
</dbReference>
<dbReference type="GeneTree" id="ENSGT00950000182929"/>
<dbReference type="HOGENOM" id="CLU_066029_0_0_1"/>
<dbReference type="InParanoid" id="P18649"/>
<dbReference type="OMA" id="GHMTDAR"/>
<dbReference type="OrthoDB" id="9048614at2759"/>
<dbReference type="TreeFam" id="TF334458"/>
<dbReference type="Reactome" id="R-CFA-3000480">
    <property type="pathway name" value="Scavenging by Class A Receptors"/>
</dbReference>
<dbReference type="Reactome" id="R-CFA-381426">
    <property type="pathway name" value="Regulation of Insulin-like Growth Factor (IGF) transport and uptake by Insulin-like Growth Factor Binding Proteins (IGFBPs)"/>
</dbReference>
<dbReference type="Reactome" id="R-CFA-8957275">
    <property type="pathway name" value="Post-translational protein phosphorylation"/>
</dbReference>
<dbReference type="Reactome" id="R-CFA-8963888">
    <property type="pathway name" value="Chylomicron assembly"/>
</dbReference>
<dbReference type="Reactome" id="R-CFA-8963901">
    <property type="pathway name" value="Chylomicron remodeling"/>
</dbReference>
<dbReference type="Reactome" id="R-CFA-8964026">
    <property type="pathway name" value="Chylomicron clearance"/>
</dbReference>
<dbReference type="Reactome" id="R-CFA-8964058">
    <property type="pathway name" value="HDL remodeling"/>
</dbReference>
<dbReference type="Reactome" id="R-CFA-975634">
    <property type="pathway name" value="Retinoid metabolism and transport"/>
</dbReference>
<dbReference type="Proteomes" id="UP000002254">
    <property type="component" value="Chromosome 1"/>
</dbReference>
<dbReference type="Proteomes" id="UP000694429">
    <property type="component" value="Unplaced"/>
</dbReference>
<dbReference type="Proteomes" id="UP000694542">
    <property type="component" value="Unplaced"/>
</dbReference>
<dbReference type="Proteomes" id="UP000805418">
    <property type="component" value="Chromosome 1"/>
</dbReference>
<dbReference type="GO" id="GO:0034360">
    <property type="term" value="C:chylomicron remnant"/>
    <property type="evidence" value="ECO:0007669"/>
    <property type="project" value="Ensembl"/>
</dbReference>
<dbReference type="GO" id="GO:0005783">
    <property type="term" value="C:endoplasmic reticulum"/>
    <property type="evidence" value="ECO:0007669"/>
    <property type="project" value="Ensembl"/>
</dbReference>
<dbReference type="GO" id="GO:0070062">
    <property type="term" value="C:extracellular exosome"/>
    <property type="evidence" value="ECO:0000250"/>
    <property type="project" value="UniProtKB"/>
</dbReference>
<dbReference type="GO" id="GO:0031012">
    <property type="term" value="C:extracellular matrix"/>
    <property type="evidence" value="ECO:0000250"/>
    <property type="project" value="UniProtKB"/>
</dbReference>
<dbReference type="GO" id="GO:0005615">
    <property type="term" value="C:extracellular space"/>
    <property type="evidence" value="ECO:0000250"/>
    <property type="project" value="UniProtKB"/>
</dbReference>
<dbReference type="GO" id="GO:0098978">
    <property type="term" value="C:glutamatergic synapse"/>
    <property type="evidence" value="ECO:0007669"/>
    <property type="project" value="Ensembl"/>
</dbReference>
<dbReference type="GO" id="GO:0005794">
    <property type="term" value="C:Golgi apparatus"/>
    <property type="evidence" value="ECO:0007669"/>
    <property type="project" value="Ensembl"/>
</dbReference>
<dbReference type="GO" id="GO:0034364">
    <property type="term" value="C:high-density lipoprotein particle"/>
    <property type="evidence" value="ECO:0000250"/>
    <property type="project" value="UniProtKB"/>
</dbReference>
<dbReference type="GO" id="GO:0034363">
    <property type="term" value="C:intermediate-density lipoprotein particle"/>
    <property type="evidence" value="ECO:0000250"/>
    <property type="project" value="UniProtKB"/>
</dbReference>
<dbReference type="GO" id="GO:0034362">
    <property type="term" value="C:low-density lipoprotein particle"/>
    <property type="evidence" value="ECO:0000250"/>
    <property type="project" value="UniProtKB"/>
</dbReference>
<dbReference type="GO" id="GO:0042470">
    <property type="term" value="C:melanosome"/>
    <property type="evidence" value="ECO:0007669"/>
    <property type="project" value="Ensembl"/>
</dbReference>
<dbReference type="GO" id="GO:0097487">
    <property type="term" value="C:multivesicular body, internal vesicle"/>
    <property type="evidence" value="ECO:0000250"/>
    <property type="project" value="UniProtKB"/>
</dbReference>
<dbReference type="GO" id="GO:0005886">
    <property type="term" value="C:plasma membrane"/>
    <property type="evidence" value="ECO:0007669"/>
    <property type="project" value="GOC"/>
</dbReference>
<dbReference type="GO" id="GO:0043083">
    <property type="term" value="C:synaptic cleft"/>
    <property type="evidence" value="ECO:0007669"/>
    <property type="project" value="Ensembl"/>
</dbReference>
<dbReference type="GO" id="GO:0034361">
    <property type="term" value="C:very-low-density lipoprotein particle"/>
    <property type="evidence" value="ECO:0000250"/>
    <property type="project" value="UniProtKB"/>
</dbReference>
<dbReference type="GO" id="GO:0001540">
    <property type="term" value="F:amyloid-beta binding"/>
    <property type="evidence" value="ECO:0000250"/>
    <property type="project" value="UniProtKB"/>
</dbReference>
<dbReference type="GO" id="GO:0016209">
    <property type="term" value="F:antioxidant activity"/>
    <property type="evidence" value="ECO:0007669"/>
    <property type="project" value="Ensembl"/>
</dbReference>
<dbReference type="GO" id="GO:0120020">
    <property type="term" value="F:cholesterol transfer activity"/>
    <property type="evidence" value="ECO:0007669"/>
    <property type="project" value="Ensembl"/>
</dbReference>
<dbReference type="GO" id="GO:0019899">
    <property type="term" value="F:enzyme binding"/>
    <property type="evidence" value="ECO:0007669"/>
    <property type="project" value="Ensembl"/>
</dbReference>
<dbReference type="GO" id="GO:0043395">
    <property type="term" value="F:heparan sulfate proteoglycan binding"/>
    <property type="evidence" value="ECO:0000250"/>
    <property type="project" value="UniProtKB"/>
</dbReference>
<dbReference type="GO" id="GO:0008201">
    <property type="term" value="F:heparin binding"/>
    <property type="evidence" value="ECO:0000250"/>
    <property type="project" value="UniProtKB"/>
</dbReference>
<dbReference type="GO" id="GO:0042802">
    <property type="term" value="F:identical protein binding"/>
    <property type="evidence" value="ECO:0000250"/>
    <property type="project" value="UniProtKB"/>
</dbReference>
<dbReference type="GO" id="GO:0071813">
    <property type="term" value="F:lipoprotein particle binding"/>
    <property type="evidence" value="ECO:0007669"/>
    <property type="project" value="Ensembl"/>
</dbReference>
<dbReference type="GO" id="GO:0050750">
    <property type="term" value="F:low-density lipoprotein particle receptor binding"/>
    <property type="evidence" value="ECO:0000250"/>
    <property type="project" value="UniProtKB"/>
</dbReference>
<dbReference type="GO" id="GO:0046911">
    <property type="term" value="F:metal chelating activity"/>
    <property type="evidence" value="ECO:0007669"/>
    <property type="project" value="Ensembl"/>
</dbReference>
<dbReference type="GO" id="GO:0060228">
    <property type="term" value="F:phosphatidylcholine-sterol O-acyltransferase activator activity"/>
    <property type="evidence" value="ECO:0007669"/>
    <property type="project" value="Ensembl"/>
</dbReference>
<dbReference type="GO" id="GO:0005543">
    <property type="term" value="F:phospholipid binding"/>
    <property type="evidence" value="ECO:0007669"/>
    <property type="project" value="Ensembl"/>
</dbReference>
<dbReference type="GO" id="GO:0042803">
    <property type="term" value="F:protein homodimerization activity"/>
    <property type="evidence" value="ECO:0007669"/>
    <property type="project" value="Ensembl"/>
</dbReference>
<dbReference type="GO" id="GO:0048018">
    <property type="term" value="F:receptor ligand activity"/>
    <property type="evidence" value="ECO:0007669"/>
    <property type="project" value="Ensembl"/>
</dbReference>
<dbReference type="GO" id="GO:0048156">
    <property type="term" value="F:tau protein binding"/>
    <property type="evidence" value="ECO:0007669"/>
    <property type="project" value="Ensembl"/>
</dbReference>
<dbReference type="GO" id="GO:0070326">
    <property type="term" value="F:very-low-density lipoprotein particle receptor binding"/>
    <property type="evidence" value="ECO:0007669"/>
    <property type="project" value="Ensembl"/>
</dbReference>
<dbReference type="GO" id="GO:0097113">
    <property type="term" value="P:AMPA glutamate receptor clustering"/>
    <property type="evidence" value="ECO:0007669"/>
    <property type="project" value="Ensembl"/>
</dbReference>
<dbReference type="GO" id="GO:0042982">
    <property type="term" value="P:amyloid precursor protein metabolic process"/>
    <property type="evidence" value="ECO:0007669"/>
    <property type="project" value="Ensembl"/>
</dbReference>
<dbReference type="GO" id="GO:0048844">
    <property type="term" value="P:artery morphogenesis"/>
    <property type="evidence" value="ECO:0007669"/>
    <property type="project" value="Ensembl"/>
</dbReference>
<dbReference type="GO" id="GO:0071402">
    <property type="term" value="P:cellular response to lipoprotein particle stimulus"/>
    <property type="evidence" value="ECO:0007669"/>
    <property type="project" value="Ensembl"/>
</dbReference>
<dbReference type="GO" id="GO:0006707">
    <property type="term" value="P:cholesterol catabolic process"/>
    <property type="evidence" value="ECO:0007669"/>
    <property type="project" value="Ensembl"/>
</dbReference>
<dbReference type="GO" id="GO:0033344">
    <property type="term" value="P:cholesterol efflux"/>
    <property type="evidence" value="ECO:0000250"/>
    <property type="project" value="UniProtKB"/>
</dbReference>
<dbReference type="GO" id="GO:0042632">
    <property type="term" value="P:cholesterol homeostasis"/>
    <property type="evidence" value="ECO:0007669"/>
    <property type="project" value="Ensembl"/>
</dbReference>
<dbReference type="GO" id="GO:0034382">
    <property type="term" value="P:chylomicron remnant clearance"/>
    <property type="evidence" value="ECO:0000250"/>
    <property type="project" value="UniProtKB"/>
</dbReference>
<dbReference type="GO" id="GO:0055089">
    <property type="term" value="P:fatty acid homeostasis"/>
    <property type="evidence" value="ECO:0007669"/>
    <property type="project" value="Ensembl"/>
</dbReference>
<dbReference type="GO" id="GO:0007186">
    <property type="term" value="P:G protein-coupled receptor signaling pathway"/>
    <property type="evidence" value="ECO:0007669"/>
    <property type="project" value="Ensembl"/>
</dbReference>
<dbReference type="GO" id="GO:0010467">
    <property type="term" value="P:gene expression"/>
    <property type="evidence" value="ECO:0007669"/>
    <property type="project" value="Ensembl"/>
</dbReference>
<dbReference type="GO" id="GO:0034380">
    <property type="term" value="P:high-density lipoprotein particle assembly"/>
    <property type="evidence" value="ECO:0000250"/>
    <property type="project" value="UniProtKB"/>
</dbReference>
<dbReference type="GO" id="GO:0034384">
    <property type="term" value="P:high-density lipoprotein particle clearance"/>
    <property type="evidence" value="ECO:0007669"/>
    <property type="project" value="Ensembl"/>
</dbReference>
<dbReference type="GO" id="GO:0034375">
    <property type="term" value="P:high-density lipoprotein particle remodeling"/>
    <property type="evidence" value="ECO:0007669"/>
    <property type="project" value="Ensembl"/>
</dbReference>
<dbReference type="GO" id="GO:0071831">
    <property type="term" value="P:intermediate-density lipoprotein particle clearance"/>
    <property type="evidence" value="ECO:0000250"/>
    <property type="project" value="UniProtKB"/>
</dbReference>
<dbReference type="GO" id="GO:0006874">
    <property type="term" value="P:intracellular calcium ion homeostasis"/>
    <property type="evidence" value="ECO:0007669"/>
    <property type="project" value="Ensembl"/>
</dbReference>
<dbReference type="GO" id="GO:0010877">
    <property type="term" value="P:lipid transport involved in lipid storage"/>
    <property type="evidence" value="ECO:0007669"/>
    <property type="project" value="Ensembl"/>
</dbReference>
<dbReference type="GO" id="GO:0042158">
    <property type="term" value="P:lipoprotein biosynthetic process"/>
    <property type="evidence" value="ECO:0000250"/>
    <property type="project" value="UniProtKB"/>
</dbReference>
<dbReference type="GO" id="GO:0042159">
    <property type="term" value="P:lipoprotein catabolic process"/>
    <property type="evidence" value="ECO:0007669"/>
    <property type="project" value="Ensembl"/>
</dbReference>
<dbReference type="GO" id="GO:0035641">
    <property type="term" value="P:locomotory exploration behavior"/>
    <property type="evidence" value="ECO:0007669"/>
    <property type="project" value="Ensembl"/>
</dbReference>
<dbReference type="GO" id="GO:0015909">
    <property type="term" value="P:long-chain fatty acid transport"/>
    <property type="evidence" value="ECO:0007669"/>
    <property type="project" value="Ensembl"/>
</dbReference>
<dbReference type="GO" id="GO:0007616">
    <property type="term" value="P:long-term memory"/>
    <property type="evidence" value="ECO:0007669"/>
    <property type="project" value="Ensembl"/>
</dbReference>
<dbReference type="GO" id="GO:0034374">
    <property type="term" value="P:low-density lipoprotein particle remodeling"/>
    <property type="evidence" value="ECO:0007669"/>
    <property type="project" value="Ensembl"/>
</dbReference>
<dbReference type="GO" id="GO:0051651">
    <property type="term" value="P:maintenance of location in cell"/>
    <property type="evidence" value="ECO:0007669"/>
    <property type="project" value="Ensembl"/>
</dbReference>
<dbReference type="GO" id="GO:0032438">
    <property type="term" value="P:melanosome organization"/>
    <property type="evidence" value="ECO:0000250"/>
    <property type="project" value="UniProtKB"/>
</dbReference>
<dbReference type="GO" id="GO:1905907">
    <property type="term" value="P:negative regulation of amyloid fibril formation"/>
    <property type="evidence" value="ECO:0000250"/>
    <property type="project" value="UniProtKB"/>
</dbReference>
<dbReference type="GO" id="GO:1902430">
    <property type="term" value="P:negative regulation of amyloid-beta formation"/>
    <property type="evidence" value="ECO:0007669"/>
    <property type="project" value="Ensembl"/>
</dbReference>
<dbReference type="GO" id="GO:0043537">
    <property type="term" value="P:negative regulation of blood vessel endothelial cell migration"/>
    <property type="evidence" value="ECO:0007669"/>
    <property type="project" value="Ensembl"/>
</dbReference>
<dbReference type="GO" id="GO:0090090">
    <property type="term" value="P:negative regulation of canonical Wnt signaling pathway"/>
    <property type="evidence" value="ECO:0007669"/>
    <property type="project" value="Ensembl"/>
</dbReference>
<dbReference type="GO" id="GO:0045541">
    <property type="term" value="P:negative regulation of cholesterol biosynthetic process"/>
    <property type="evidence" value="ECO:0007669"/>
    <property type="project" value="Ensembl"/>
</dbReference>
<dbReference type="GO" id="GO:0001937">
    <property type="term" value="P:negative regulation of endothelial cell proliferation"/>
    <property type="evidence" value="ECO:0007669"/>
    <property type="project" value="Ensembl"/>
</dbReference>
<dbReference type="GO" id="GO:0010629">
    <property type="term" value="P:negative regulation of gene expression"/>
    <property type="evidence" value="ECO:0007669"/>
    <property type="project" value="Ensembl"/>
</dbReference>
<dbReference type="GO" id="GO:0050728">
    <property type="term" value="P:negative regulation of inflammatory response"/>
    <property type="evidence" value="ECO:0007669"/>
    <property type="project" value="Ensembl"/>
</dbReference>
<dbReference type="GO" id="GO:1900272">
    <property type="term" value="P:negative regulation of long-term synaptic potentiation"/>
    <property type="evidence" value="ECO:0007669"/>
    <property type="project" value="Ensembl"/>
</dbReference>
<dbReference type="GO" id="GO:0010977">
    <property type="term" value="P:negative regulation of neuron projection development"/>
    <property type="evidence" value="ECO:0007669"/>
    <property type="project" value="Ensembl"/>
</dbReference>
<dbReference type="GO" id="GO:0010544">
    <property type="term" value="P:negative regulation of platelet activation"/>
    <property type="evidence" value="ECO:0007669"/>
    <property type="project" value="Ensembl"/>
</dbReference>
<dbReference type="GO" id="GO:0050709">
    <property type="term" value="P:negative regulation of protein secretion"/>
    <property type="evidence" value="ECO:0007669"/>
    <property type="project" value="Ensembl"/>
</dbReference>
<dbReference type="GO" id="GO:0048662">
    <property type="term" value="P:negative regulation of smooth muscle cell proliferation"/>
    <property type="evidence" value="ECO:0007669"/>
    <property type="project" value="Ensembl"/>
</dbReference>
<dbReference type="GO" id="GO:0090209">
    <property type="term" value="P:negative regulation of triglyceride metabolic process"/>
    <property type="evidence" value="ECO:0007669"/>
    <property type="project" value="Ensembl"/>
</dbReference>
<dbReference type="GO" id="GO:0031175">
    <property type="term" value="P:neuron projection development"/>
    <property type="evidence" value="ECO:0007669"/>
    <property type="project" value="Ensembl"/>
</dbReference>
<dbReference type="GO" id="GO:0038060">
    <property type="term" value="P:nitric oxide-cGMP-mediated signaling"/>
    <property type="evidence" value="ECO:0007669"/>
    <property type="project" value="Ensembl"/>
</dbReference>
<dbReference type="GO" id="GO:0097114">
    <property type="term" value="P:NMDA glutamate receptor clustering"/>
    <property type="evidence" value="ECO:0007669"/>
    <property type="project" value="Ensembl"/>
</dbReference>
<dbReference type="GO" id="GO:0033700">
    <property type="term" value="P:phospholipid efflux"/>
    <property type="evidence" value="ECO:0007669"/>
    <property type="project" value="Ensembl"/>
</dbReference>
<dbReference type="GO" id="GO:0044794">
    <property type="term" value="P:positive regulation by host of viral process"/>
    <property type="evidence" value="ECO:0007669"/>
    <property type="project" value="Ensembl"/>
</dbReference>
<dbReference type="GO" id="GO:1900223">
    <property type="term" value="P:positive regulation of amyloid-beta clearance"/>
    <property type="evidence" value="ECO:0000250"/>
    <property type="project" value="UniProtKB"/>
</dbReference>
<dbReference type="GO" id="GO:0010875">
    <property type="term" value="P:positive regulation of cholesterol efflux"/>
    <property type="evidence" value="ECO:0007669"/>
    <property type="project" value="Ensembl"/>
</dbReference>
<dbReference type="GO" id="GO:0090205">
    <property type="term" value="P:positive regulation of cholesterol metabolic process"/>
    <property type="evidence" value="ECO:0007669"/>
    <property type="project" value="Ensembl"/>
</dbReference>
<dbReference type="GO" id="GO:0060999">
    <property type="term" value="P:positive regulation of dendritic spine development"/>
    <property type="evidence" value="ECO:0007669"/>
    <property type="project" value="Ensembl"/>
</dbReference>
<dbReference type="GO" id="GO:1902952">
    <property type="term" value="P:positive regulation of dendritic spine maintenance"/>
    <property type="evidence" value="ECO:0007669"/>
    <property type="project" value="Ensembl"/>
</dbReference>
<dbReference type="GO" id="GO:0045893">
    <property type="term" value="P:positive regulation of DNA-templated transcription"/>
    <property type="evidence" value="ECO:0007669"/>
    <property type="project" value="Ensembl"/>
</dbReference>
<dbReference type="GO" id="GO:0045807">
    <property type="term" value="P:positive regulation of endocytosis"/>
    <property type="evidence" value="ECO:0007669"/>
    <property type="project" value="Ensembl"/>
</dbReference>
<dbReference type="GO" id="GO:0070374">
    <property type="term" value="P:positive regulation of ERK1 and ERK2 cascade"/>
    <property type="evidence" value="ECO:0007669"/>
    <property type="project" value="Ensembl"/>
</dbReference>
<dbReference type="GO" id="GO:0046889">
    <property type="term" value="P:positive regulation of lipid biosynthetic process"/>
    <property type="evidence" value="ECO:0007669"/>
    <property type="project" value="Ensembl"/>
</dbReference>
<dbReference type="GO" id="GO:1903002">
    <property type="term" value="P:positive regulation of lipid transport across blood-brain barrier"/>
    <property type="evidence" value="ECO:0007669"/>
    <property type="project" value="Ensembl"/>
</dbReference>
<dbReference type="GO" id="GO:0140077">
    <property type="term" value="P:positive regulation of lipoprotein transport"/>
    <property type="evidence" value="ECO:0007669"/>
    <property type="project" value="Ensembl"/>
</dbReference>
<dbReference type="GO" id="GO:0032805">
    <property type="term" value="P:positive regulation of low-density lipoprotein particle receptor catabolic process"/>
    <property type="evidence" value="ECO:0007669"/>
    <property type="project" value="Ensembl"/>
</dbReference>
<dbReference type="GO" id="GO:0051044">
    <property type="term" value="P:positive regulation of membrane protein ectodomain proteolysis"/>
    <property type="evidence" value="ECO:0007669"/>
    <property type="project" value="Ensembl"/>
</dbReference>
<dbReference type="GO" id="GO:0010976">
    <property type="term" value="P:positive regulation of neuron projection development"/>
    <property type="evidence" value="ECO:0007669"/>
    <property type="project" value="Ensembl"/>
</dbReference>
<dbReference type="GO" id="GO:0045429">
    <property type="term" value="P:positive regulation of nitric oxide biosynthetic process"/>
    <property type="evidence" value="ECO:0007669"/>
    <property type="project" value="Ensembl"/>
</dbReference>
<dbReference type="GO" id="GO:1902995">
    <property type="term" value="P:positive regulation of phospholipid efflux"/>
    <property type="evidence" value="ECO:0007669"/>
    <property type="project" value="Ensembl"/>
</dbReference>
<dbReference type="GO" id="GO:0017038">
    <property type="term" value="P:protein import"/>
    <property type="evidence" value="ECO:0007669"/>
    <property type="project" value="Ensembl"/>
</dbReference>
<dbReference type="GO" id="GO:0006898">
    <property type="term" value="P:receptor-mediated endocytosis"/>
    <property type="evidence" value="ECO:0007669"/>
    <property type="project" value="Ensembl"/>
</dbReference>
<dbReference type="GO" id="GO:0042981">
    <property type="term" value="P:regulation of apoptotic process"/>
    <property type="evidence" value="ECO:0007669"/>
    <property type="project" value="Ensembl"/>
</dbReference>
<dbReference type="GO" id="GO:2000822">
    <property type="term" value="P:regulation of behavioral fear response"/>
    <property type="evidence" value="ECO:0007669"/>
    <property type="project" value="Ensembl"/>
</dbReference>
<dbReference type="GO" id="GO:0032489">
    <property type="term" value="P:regulation of Cdc42 protein signal transduction"/>
    <property type="evidence" value="ECO:0007669"/>
    <property type="project" value="Ensembl"/>
</dbReference>
<dbReference type="GO" id="GO:1905890">
    <property type="term" value="P:regulation of cellular response to very-low-density lipoprotein particle stimulus"/>
    <property type="evidence" value="ECO:0007669"/>
    <property type="project" value="Ensembl"/>
</dbReference>
<dbReference type="GO" id="GO:0045088">
    <property type="term" value="P:regulation of innate immune response"/>
    <property type="evidence" value="ECO:0007669"/>
    <property type="project" value="Ensembl"/>
</dbReference>
<dbReference type="GO" id="GO:0061136">
    <property type="term" value="P:regulation of proteasomal protein catabolic process"/>
    <property type="evidence" value="ECO:0007669"/>
    <property type="project" value="Ensembl"/>
</dbReference>
<dbReference type="GO" id="GO:0043254">
    <property type="term" value="P:regulation of protein-containing complex assembly"/>
    <property type="evidence" value="ECO:0007669"/>
    <property type="project" value="Ensembl"/>
</dbReference>
<dbReference type="GO" id="GO:0061771">
    <property type="term" value="P:response to caloric restriction"/>
    <property type="evidence" value="ECO:0007669"/>
    <property type="project" value="Ensembl"/>
</dbReference>
<dbReference type="GO" id="GO:0002021">
    <property type="term" value="P:response to dietary excess"/>
    <property type="evidence" value="ECO:0007669"/>
    <property type="project" value="Ensembl"/>
</dbReference>
<dbReference type="GO" id="GO:0006979">
    <property type="term" value="P:response to oxidative stress"/>
    <property type="evidence" value="ECO:0007669"/>
    <property type="project" value="Ensembl"/>
</dbReference>
<dbReference type="GO" id="GO:0043691">
    <property type="term" value="P:reverse cholesterol transport"/>
    <property type="evidence" value="ECO:0007669"/>
    <property type="project" value="Ensembl"/>
</dbReference>
<dbReference type="GO" id="GO:0070328">
    <property type="term" value="P:triglyceride homeostasis"/>
    <property type="evidence" value="ECO:0007669"/>
    <property type="project" value="Ensembl"/>
</dbReference>
<dbReference type="GO" id="GO:0006641">
    <property type="term" value="P:triglyceride metabolic process"/>
    <property type="evidence" value="ECO:0007669"/>
    <property type="project" value="Ensembl"/>
</dbReference>
<dbReference type="GO" id="GO:0071830">
    <property type="term" value="P:triglyceride-rich lipoprotein particle clearance"/>
    <property type="evidence" value="ECO:0000250"/>
    <property type="project" value="UniProtKB"/>
</dbReference>
<dbReference type="GO" id="GO:0042311">
    <property type="term" value="P:vasodilation"/>
    <property type="evidence" value="ECO:0007669"/>
    <property type="project" value="Ensembl"/>
</dbReference>
<dbReference type="GO" id="GO:0034447">
    <property type="term" value="P:very-low-density lipoprotein particle clearance"/>
    <property type="evidence" value="ECO:0000250"/>
    <property type="project" value="UniProtKB"/>
</dbReference>
<dbReference type="GO" id="GO:0034372">
    <property type="term" value="P:very-low-density lipoprotein particle remodeling"/>
    <property type="evidence" value="ECO:0007669"/>
    <property type="project" value="Ensembl"/>
</dbReference>
<dbReference type="GO" id="GO:0019068">
    <property type="term" value="P:virion assembly"/>
    <property type="evidence" value="ECO:0007669"/>
    <property type="project" value="Ensembl"/>
</dbReference>
<dbReference type="FunFam" id="1.20.120.20:FF:000002">
    <property type="entry name" value="Apolipoprotein E"/>
    <property type="match status" value="1"/>
</dbReference>
<dbReference type="FunFam" id="1.20.120.20:FF:000003">
    <property type="entry name" value="Apolipoprotein E"/>
    <property type="match status" value="1"/>
</dbReference>
<dbReference type="Gene3D" id="1.20.120.20">
    <property type="entry name" value="Apolipoprotein"/>
    <property type="match status" value="2"/>
</dbReference>
<dbReference type="InterPro" id="IPR000074">
    <property type="entry name" value="ApoA_E"/>
</dbReference>
<dbReference type="InterPro" id="IPR050163">
    <property type="entry name" value="Apolipoprotein_A1/A4/E"/>
</dbReference>
<dbReference type="PANTHER" id="PTHR18976">
    <property type="entry name" value="APOLIPOPROTEIN"/>
    <property type="match status" value="1"/>
</dbReference>
<dbReference type="PANTHER" id="PTHR18976:SF2">
    <property type="entry name" value="APOLIPOPROTEIN E"/>
    <property type="match status" value="1"/>
</dbReference>
<dbReference type="Pfam" id="PF01442">
    <property type="entry name" value="Apolipoprotein"/>
    <property type="match status" value="1"/>
</dbReference>
<dbReference type="SUPFAM" id="SSF58113">
    <property type="entry name" value="Apolipoprotein A-I"/>
    <property type="match status" value="1"/>
</dbReference>
<feature type="signal peptide" evidence="3">
    <location>
        <begin position="1"/>
        <end position="18"/>
    </location>
</feature>
<feature type="chain" id="PRO_0000191636" description="Apolipoprotein E">
    <location>
        <begin position="19"/>
        <end position="323"/>
    </location>
</feature>
<feature type="repeat" description="1">
    <location>
        <begin position="86"/>
        <end position="107"/>
    </location>
</feature>
<feature type="repeat" description="2">
    <location>
        <begin position="108"/>
        <end position="129"/>
    </location>
</feature>
<feature type="repeat" description="3">
    <location>
        <begin position="130"/>
        <end position="151"/>
    </location>
</feature>
<feature type="repeat" description="4">
    <location>
        <begin position="152"/>
        <end position="173"/>
    </location>
</feature>
<feature type="repeat" description="5">
    <location>
        <begin position="174"/>
        <end position="195"/>
    </location>
</feature>
<feature type="repeat" description="6">
    <location>
        <begin position="196"/>
        <end position="217"/>
    </location>
</feature>
<feature type="repeat" description="7">
    <location>
        <begin position="218"/>
        <end position="239"/>
    </location>
</feature>
<feature type="repeat" description="8">
    <location>
        <begin position="240"/>
        <end position="261"/>
    </location>
</feature>
<feature type="region of interest" description="8 X 22 AA approximate tandem repeats">
    <location>
        <begin position="86"/>
        <end position="261"/>
    </location>
</feature>
<feature type="region of interest" description="LDL and other lipoprotein receptors binding" evidence="1">
    <location>
        <begin position="164"/>
        <end position="174"/>
    </location>
</feature>
<feature type="region of interest" description="Lipid-binding and lipoprotein association" evidence="1">
    <location>
        <begin position="216"/>
        <end position="296"/>
    </location>
</feature>
<feature type="region of interest" description="Homooligomerization" evidence="1">
    <location>
        <begin position="272"/>
        <end position="323"/>
    </location>
</feature>
<feature type="region of interest" description="Specificity for association with VLDL" evidence="1">
    <location>
        <begin position="284"/>
        <end position="296"/>
    </location>
</feature>
<feature type="binding site" evidence="1">
    <location>
        <begin position="168"/>
        <end position="171"/>
    </location>
    <ligand>
        <name>heparin</name>
        <dbReference type="ChEBI" id="CHEBI:28304"/>
    </ligand>
</feature>
<feature type="binding site" evidence="1">
    <location>
        <begin position="235"/>
        <end position="242"/>
    </location>
    <ligand>
        <name>heparin</name>
        <dbReference type="ChEBI" id="CHEBI:28304"/>
    </ligand>
</feature>
<feature type="modified residue" description="Methionine sulfoxide" evidence="2">
    <location>
        <position position="149"/>
    </location>
</feature>
<feature type="modified residue" description="Phosphoserine" evidence="1">
    <location>
        <position position="153"/>
    </location>
</feature>
<feature type="sequence conflict" description="In Ref. 3." evidence="4" ref="3">
    <original>S</original>
    <variation>A</variation>
    <location>
        <position position="130"/>
    </location>
</feature>
<feature type="sequence conflict" description="In Ref. 3." evidence="4" ref="3">
    <original>L</original>
    <variation>W</variation>
    <location>
        <position position="234"/>
    </location>
</feature>
<organism>
    <name type="scientific">Canis lupus familiaris</name>
    <name type="common">Dog</name>
    <name type="synonym">Canis familiaris</name>
    <dbReference type="NCBI Taxonomy" id="9615"/>
    <lineage>
        <taxon>Eukaryota</taxon>
        <taxon>Metazoa</taxon>
        <taxon>Chordata</taxon>
        <taxon>Craniata</taxon>
        <taxon>Vertebrata</taxon>
        <taxon>Euteleostomi</taxon>
        <taxon>Mammalia</taxon>
        <taxon>Eutheria</taxon>
        <taxon>Laurasiatheria</taxon>
        <taxon>Carnivora</taxon>
        <taxon>Caniformia</taxon>
        <taxon>Canidae</taxon>
        <taxon>Canis</taxon>
    </lineage>
</organism>
<proteinExistence type="evidence at protein level"/>
<gene>
    <name type="primary">APOE</name>
</gene>